<protein>
    <recommendedName>
        <fullName>Protein CREG1</fullName>
    </recommendedName>
    <alternativeName>
        <fullName>Cellular repressor of E1A-stimulated genes 1</fullName>
    </alternativeName>
</protein>
<sequence>MAARAPELARSLLAALLAPALVALLVSPASGRGGRDHGDWDVDRRLPPLPPREDGPRVARFVTHVSDWGSLATISTIKEVRGWPFADIISISDGPPGEGTGEPYMYLSPLQQAVSDLQENPEATLTMSLAQTVYCRNHGFDPQSPLCVHIMMSGTVTKVNKTEEDYARDSLFVRHPEMKHWPSSHNWFFAKLKISRIWVLDYFGGPKVVTPEEYFNVTLQ</sequence>
<proteinExistence type="evidence at protein level"/>
<gene>
    <name type="primary">Creg1</name>
    <name type="synonym">Creg</name>
</gene>
<feature type="signal peptide" evidence="2">
    <location>
        <begin position="1"/>
        <end position="31"/>
    </location>
</feature>
<feature type="chain" id="PRO_0000006204" description="Protein CREG1">
    <location>
        <begin position="32"/>
        <end position="220"/>
    </location>
</feature>
<feature type="region of interest" description="Disordered" evidence="3">
    <location>
        <begin position="30"/>
        <end position="53"/>
    </location>
</feature>
<feature type="compositionally biased region" description="Basic and acidic residues" evidence="3">
    <location>
        <begin position="33"/>
        <end position="53"/>
    </location>
</feature>
<feature type="glycosylation site" description="N-linked (GlcNAc...) asparagine" evidence="2">
    <location>
        <position position="160"/>
    </location>
</feature>
<feature type="glycosylation site" description="N-linked (GlcNAc...) asparagine" evidence="2">
    <location>
        <position position="216"/>
    </location>
</feature>
<feature type="sequence conflict" description="In Ref. 2; BAC39549." evidence="5" ref="2">
    <original>V</original>
    <variation>M</variation>
    <location>
        <position position="62"/>
    </location>
</feature>
<accession>O88668</accession>
<accession>Q3UNP8</accession>
<accession>Q8C3I1</accession>
<organism>
    <name type="scientific">Mus musculus</name>
    <name type="common">Mouse</name>
    <dbReference type="NCBI Taxonomy" id="10090"/>
    <lineage>
        <taxon>Eukaryota</taxon>
        <taxon>Metazoa</taxon>
        <taxon>Chordata</taxon>
        <taxon>Craniata</taxon>
        <taxon>Vertebrata</taxon>
        <taxon>Euteleostomi</taxon>
        <taxon>Mammalia</taxon>
        <taxon>Eutheria</taxon>
        <taxon>Euarchontoglires</taxon>
        <taxon>Glires</taxon>
        <taxon>Rodentia</taxon>
        <taxon>Myomorpha</taxon>
        <taxon>Muroidea</taxon>
        <taxon>Muridae</taxon>
        <taxon>Murinae</taxon>
        <taxon>Mus</taxon>
        <taxon>Mus</taxon>
    </lineage>
</organism>
<dbReference type="EMBL" id="AF084524">
    <property type="protein sequence ID" value="AAC34862.1"/>
    <property type="molecule type" value="mRNA"/>
</dbReference>
<dbReference type="EMBL" id="AK005388">
    <property type="protein sequence ID" value="BAB23994.1"/>
    <property type="molecule type" value="mRNA"/>
</dbReference>
<dbReference type="EMBL" id="AK010947">
    <property type="protein sequence ID" value="BAB27285.1"/>
    <property type="molecule type" value="mRNA"/>
</dbReference>
<dbReference type="EMBL" id="AK085844">
    <property type="protein sequence ID" value="BAC39549.1"/>
    <property type="molecule type" value="mRNA"/>
</dbReference>
<dbReference type="EMBL" id="AK144101">
    <property type="protein sequence ID" value="BAE25699.1"/>
    <property type="molecule type" value="mRNA"/>
</dbReference>
<dbReference type="EMBL" id="BC027426">
    <property type="protein sequence ID" value="AAH27426.1"/>
    <property type="molecule type" value="mRNA"/>
</dbReference>
<dbReference type="CCDS" id="CCDS35759.1"/>
<dbReference type="RefSeq" id="NP_035934.1">
    <property type="nucleotide sequence ID" value="NM_011804.3"/>
</dbReference>
<dbReference type="RefSeq" id="XP_006496993.1">
    <property type="nucleotide sequence ID" value="XM_006496930.1"/>
</dbReference>
<dbReference type="SMR" id="O88668"/>
<dbReference type="BioGRID" id="241197">
    <property type="interactions" value="3"/>
</dbReference>
<dbReference type="FunCoup" id="O88668">
    <property type="interactions" value="98"/>
</dbReference>
<dbReference type="STRING" id="10090.ENSMUSP00000107060"/>
<dbReference type="GlyConnect" id="2620">
    <property type="glycosylation" value="5 N-Linked glycans (1 site)"/>
</dbReference>
<dbReference type="GlyCosmos" id="O88668">
    <property type="glycosylation" value="2 sites, 5 glycans"/>
</dbReference>
<dbReference type="GlyGen" id="O88668">
    <property type="glycosylation" value="4 sites, 7 N-linked glycans (2 sites), 1 O-linked glycan (2 sites)"/>
</dbReference>
<dbReference type="iPTMnet" id="O88668"/>
<dbReference type="PhosphoSitePlus" id="O88668"/>
<dbReference type="jPOST" id="O88668"/>
<dbReference type="PaxDb" id="10090-ENSMUSP00000107060"/>
<dbReference type="PeptideAtlas" id="O88668"/>
<dbReference type="ProteomicsDB" id="285306"/>
<dbReference type="Pumba" id="O88668"/>
<dbReference type="Antibodypedia" id="20531">
    <property type="antibodies" value="328 antibodies from 34 providers"/>
</dbReference>
<dbReference type="DNASU" id="433375"/>
<dbReference type="Ensembl" id="ENSMUST00000111432.10">
    <property type="protein sequence ID" value="ENSMUSP00000107060.4"/>
    <property type="gene ID" value="ENSMUSG00000040713.13"/>
</dbReference>
<dbReference type="GeneID" id="433375"/>
<dbReference type="KEGG" id="mmu:433375"/>
<dbReference type="UCSC" id="uc007djm.1">
    <property type="organism name" value="mouse"/>
</dbReference>
<dbReference type="AGR" id="MGI:1344382"/>
<dbReference type="CTD" id="8804"/>
<dbReference type="MGI" id="MGI:1344382">
    <property type="gene designation" value="Creg1"/>
</dbReference>
<dbReference type="VEuPathDB" id="HostDB:ENSMUSG00000040713"/>
<dbReference type="eggNOG" id="KOG3374">
    <property type="taxonomic scope" value="Eukaryota"/>
</dbReference>
<dbReference type="GeneTree" id="ENSGT00390000005914"/>
<dbReference type="HOGENOM" id="CLU_083635_3_1_1"/>
<dbReference type="InParanoid" id="O88668"/>
<dbReference type="OMA" id="AQTPYCR"/>
<dbReference type="OrthoDB" id="46836at2759"/>
<dbReference type="PhylomeDB" id="O88668"/>
<dbReference type="TreeFam" id="TF324680"/>
<dbReference type="Reactome" id="R-MMU-6798695">
    <property type="pathway name" value="Neutrophil degranulation"/>
</dbReference>
<dbReference type="BioGRID-ORCS" id="433375">
    <property type="hits" value="1 hit in 76 CRISPR screens"/>
</dbReference>
<dbReference type="ChiTaRS" id="Creg1">
    <property type="organism name" value="mouse"/>
</dbReference>
<dbReference type="PRO" id="PR:O88668"/>
<dbReference type="Proteomes" id="UP000000589">
    <property type="component" value="Chromosome 1"/>
</dbReference>
<dbReference type="RNAct" id="O88668">
    <property type="molecule type" value="protein"/>
</dbReference>
<dbReference type="Bgee" id="ENSMUSG00000040713">
    <property type="expression patterns" value="Expressed in placenta labyrinth and 253 other cell types or tissues"/>
</dbReference>
<dbReference type="ExpressionAtlas" id="O88668">
    <property type="expression patterns" value="baseline and differential"/>
</dbReference>
<dbReference type="GO" id="GO:0005768">
    <property type="term" value="C:endosome"/>
    <property type="evidence" value="ECO:0000314"/>
    <property type="project" value="MGI"/>
</dbReference>
<dbReference type="GO" id="GO:0005615">
    <property type="term" value="C:extracellular space"/>
    <property type="evidence" value="ECO:0007669"/>
    <property type="project" value="Ensembl"/>
</dbReference>
<dbReference type="GO" id="GO:0005764">
    <property type="term" value="C:lysosome"/>
    <property type="evidence" value="ECO:0000314"/>
    <property type="project" value="MGI"/>
</dbReference>
<dbReference type="GO" id="GO:0005667">
    <property type="term" value="C:transcription regulator complex"/>
    <property type="evidence" value="ECO:0000314"/>
    <property type="project" value="MGI"/>
</dbReference>
<dbReference type="GO" id="GO:0005159">
    <property type="term" value="F:insulin-like growth factor receptor binding"/>
    <property type="evidence" value="ECO:0000266"/>
    <property type="project" value="MGI"/>
</dbReference>
<dbReference type="GO" id="GO:0006914">
    <property type="term" value="P:autophagy"/>
    <property type="evidence" value="ECO:0000315"/>
    <property type="project" value="MGI"/>
</dbReference>
<dbReference type="GO" id="GO:0006897">
    <property type="term" value="P:endocytosis"/>
    <property type="evidence" value="ECO:0000315"/>
    <property type="project" value="MGI"/>
</dbReference>
<dbReference type="GO" id="GO:0007042">
    <property type="term" value="P:lysosomal lumen acidification"/>
    <property type="evidence" value="ECO:0000315"/>
    <property type="project" value="MGI"/>
</dbReference>
<dbReference type="GO" id="GO:0007040">
    <property type="term" value="P:lysosome organization"/>
    <property type="evidence" value="ECO:0000315"/>
    <property type="project" value="MGI"/>
</dbReference>
<dbReference type="GO" id="GO:0006355">
    <property type="term" value="P:regulation of DNA-templated transcription"/>
    <property type="evidence" value="ECO:0000314"/>
    <property type="project" value="MGI"/>
</dbReference>
<dbReference type="FunFam" id="2.30.110.10:FF:000004">
    <property type="entry name" value="Cellular repressor of E1A-stimulated genes 1"/>
    <property type="match status" value="1"/>
</dbReference>
<dbReference type="Gene3D" id="2.30.110.10">
    <property type="entry name" value="Electron Transport, Fmn-binding Protein, Chain A"/>
    <property type="match status" value="1"/>
</dbReference>
<dbReference type="InterPro" id="IPR014631">
    <property type="entry name" value="CREG"/>
</dbReference>
<dbReference type="InterPro" id="IPR055343">
    <property type="entry name" value="CREG_beta-barrel"/>
</dbReference>
<dbReference type="InterPro" id="IPR012349">
    <property type="entry name" value="Split_barrel_FMN-bd"/>
</dbReference>
<dbReference type="PANTHER" id="PTHR13343">
    <property type="entry name" value="CREG1 PROTEIN"/>
    <property type="match status" value="1"/>
</dbReference>
<dbReference type="PANTHER" id="PTHR13343:SF21">
    <property type="entry name" value="PROTEIN CREG1"/>
    <property type="match status" value="1"/>
</dbReference>
<dbReference type="Pfam" id="PF13883">
    <property type="entry name" value="CREG_beta-barrel"/>
    <property type="match status" value="1"/>
</dbReference>
<dbReference type="PIRSF" id="PIRSF036911">
    <property type="entry name" value="CREG"/>
    <property type="match status" value="1"/>
</dbReference>
<dbReference type="SUPFAM" id="SSF50475">
    <property type="entry name" value="FMN-binding split barrel"/>
    <property type="match status" value="1"/>
</dbReference>
<reference key="1">
    <citation type="journal article" date="1998" name="Mol. Cell. Biol.">
        <title>A cellular repressor of E1A-stimulated genes that inhibits activation by E2F.</title>
        <authorList>
            <person name="Veal E."/>
            <person name="Eisenstein M."/>
            <person name="Tseng Z.H."/>
            <person name="Gill G."/>
        </authorList>
    </citation>
    <scope>NUCLEOTIDE SEQUENCE [MRNA]</scope>
</reference>
<reference key="2">
    <citation type="journal article" date="2005" name="Science">
        <title>The transcriptional landscape of the mammalian genome.</title>
        <authorList>
            <person name="Carninci P."/>
            <person name="Kasukawa T."/>
            <person name="Katayama S."/>
            <person name="Gough J."/>
            <person name="Frith M.C."/>
            <person name="Maeda N."/>
            <person name="Oyama R."/>
            <person name="Ravasi T."/>
            <person name="Lenhard B."/>
            <person name="Wells C."/>
            <person name="Kodzius R."/>
            <person name="Shimokawa K."/>
            <person name="Bajic V.B."/>
            <person name="Brenner S.E."/>
            <person name="Batalov S."/>
            <person name="Forrest A.R."/>
            <person name="Zavolan M."/>
            <person name="Davis M.J."/>
            <person name="Wilming L.G."/>
            <person name="Aidinis V."/>
            <person name="Allen J.E."/>
            <person name="Ambesi-Impiombato A."/>
            <person name="Apweiler R."/>
            <person name="Aturaliya R.N."/>
            <person name="Bailey T.L."/>
            <person name="Bansal M."/>
            <person name="Baxter L."/>
            <person name="Beisel K.W."/>
            <person name="Bersano T."/>
            <person name="Bono H."/>
            <person name="Chalk A.M."/>
            <person name="Chiu K.P."/>
            <person name="Choudhary V."/>
            <person name="Christoffels A."/>
            <person name="Clutterbuck D.R."/>
            <person name="Crowe M.L."/>
            <person name="Dalla E."/>
            <person name="Dalrymple B.P."/>
            <person name="de Bono B."/>
            <person name="Della Gatta G."/>
            <person name="di Bernardo D."/>
            <person name="Down T."/>
            <person name="Engstrom P."/>
            <person name="Fagiolini M."/>
            <person name="Faulkner G."/>
            <person name="Fletcher C.F."/>
            <person name="Fukushima T."/>
            <person name="Furuno M."/>
            <person name="Futaki S."/>
            <person name="Gariboldi M."/>
            <person name="Georgii-Hemming P."/>
            <person name="Gingeras T.R."/>
            <person name="Gojobori T."/>
            <person name="Green R.E."/>
            <person name="Gustincich S."/>
            <person name="Harbers M."/>
            <person name="Hayashi Y."/>
            <person name="Hensch T.K."/>
            <person name="Hirokawa N."/>
            <person name="Hill D."/>
            <person name="Huminiecki L."/>
            <person name="Iacono M."/>
            <person name="Ikeo K."/>
            <person name="Iwama A."/>
            <person name="Ishikawa T."/>
            <person name="Jakt M."/>
            <person name="Kanapin A."/>
            <person name="Katoh M."/>
            <person name="Kawasawa Y."/>
            <person name="Kelso J."/>
            <person name="Kitamura H."/>
            <person name="Kitano H."/>
            <person name="Kollias G."/>
            <person name="Krishnan S.P."/>
            <person name="Kruger A."/>
            <person name="Kummerfeld S.K."/>
            <person name="Kurochkin I.V."/>
            <person name="Lareau L.F."/>
            <person name="Lazarevic D."/>
            <person name="Lipovich L."/>
            <person name="Liu J."/>
            <person name="Liuni S."/>
            <person name="McWilliam S."/>
            <person name="Madan Babu M."/>
            <person name="Madera M."/>
            <person name="Marchionni L."/>
            <person name="Matsuda H."/>
            <person name="Matsuzawa S."/>
            <person name="Miki H."/>
            <person name="Mignone F."/>
            <person name="Miyake S."/>
            <person name="Morris K."/>
            <person name="Mottagui-Tabar S."/>
            <person name="Mulder N."/>
            <person name="Nakano N."/>
            <person name="Nakauchi H."/>
            <person name="Ng P."/>
            <person name="Nilsson R."/>
            <person name="Nishiguchi S."/>
            <person name="Nishikawa S."/>
            <person name="Nori F."/>
            <person name="Ohara O."/>
            <person name="Okazaki Y."/>
            <person name="Orlando V."/>
            <person name="Pang K.C."/>
            <person name="Pavan W.J."/>
            <person name="Pavesi G."/>
            <person name="Pesole G."/>
            <person name="Petrovsky N."/>
            <person name="Piazza S."/>
            <person name="Reed J."/>
            <person name="Reid J.F."/>
            <person name="Ring B.Z."/>
            <person name="Ringwald M."/>
            <person name="Rost B."/>
            <person name="Ruan Y."/>
            <person name="Salzberg S.L."/>
            <person name="Sandelin A."/>
            <person name="Schneider C."/>
            <person name="Schoenbach C."/>
            <person name="Sekiguchi K."/>
            <person name="Semple C.A."/>
            <person name="Seno S."/>
            <person name="Sessa L."/>
            <person name="Sheng Y."/>
            <person name="Shibata Y."/>
            <person name="Shimada H."/>
            <person name="Shimada K."/>
            <person name="Silva D."/>
            <person name="Sinclair B."/>
            <person name="Sperling S."/>
            <person name="Stupka E."/>
            <person name="Sugiura K."/>
            <person name="Sultana R."/>
            <person name="Takenaka Y."/>
            <person name="Taki K."/>
            <person name="Tammoja K."/>
            <person name="Tan S.L."/>
            <person name="Tang S."/>
            <person name="Taylor M.S."/>
            <person name="Tegner J."/>
            <person name="Teichmann S.A."/>
            <person name="Ueda H.R."/>
            <person name="van Nimwegen E."/>
            <person name="Verardo R."/>
            <person name="Wei C.L."/>
            <person name="Yagi K."/>
            <person name="Yamanishi H."/>
            <person name="Zabarovsky E."/>
            <person name="Zhu S."/>
            <person name="Zimmer A."/>
            <person name="Hide W."/>
            <person name="Bult C."/>
            <person name="Grimmond S.M."/>
            <person name="Teasdale R.D."/>
            <person name="Liu E.T."/>
            <person name="Brusic V."/>
            <person name="Quackenbush J."/>
            <person name="Wahlestedt C."/>
            <person name="Mattick J.S."/>
            <person name="Hume D.A."/>
            <person name="Kai C."/>
            <person name="Sasaki D."/>
            <person name="Tomaru Y."/>
            <person name="Fukuda S."/>
            <person name="Kanamori-Katayama M."/>
            <person name="Suzuki M."/>
            <person name="Aoki J."/>
            <person name="Arakawa T."/>
            <person name="Iida J."/>
            <person name="Imamura K."/>
            <person name="Itoh M."/>
            <person name="Kato T."/>
            <person name="Kawaji H."/>
            <person name="Kawagashira N."/>
            <person name="Kawashima T."/>
            <person name="Kojima M."/>
            <person name="Kondo S."/>
            <person name="Konno H."/>
            <person name="Nakano K."/>
            <person name="Ninomiya N."/>
            <person name="Nishio T."/>
            <person name="Okada M."/>
            <person name="Plessy C."/>
            <person name="Shibata K."/>
            <person name="Shiraki T."/>
            <person name="Suzuki S."/>
            <person name="Tagami M."/>
            <person name="Waki K."/>
            <person name="Watahiki A."/>
            <person name="Okamura-Oho Y."/>
            <person name="Suzuki H."/>
            <person name="Kawai J."/>
            <person name="Hayashizaki Y."/>
        </authorList>
    </citation>
    <scope>NUCLEOTIDE SEQUENCE [LARGE SCALE MRNA]</scope>
    <source>
        <strain>C57BL/6J</strain>
        <tissue>Heart</tissue>
        <tissue>Kidney</tissue>
        <tissue>Liver</tissue>
        <tissue>Placenta</tissue>
    </source>
</reference>
<reference key="3">
    <citation type="journal article" date="2004" name="Genome Res.">
        <title>The status, quality, and expansion of the NIH full-length cDNA project: the Mammalian Gene Collection (MGC).</title>
        <authorList>
            <consortium name="The MGC Project Team"/>
        </authorList>
    </citation>
    <scope>NUCLEOTIDE SEQUENCE [LARGE SCALE MRNA]</scope>
    <source>
        <strain>C57BL/6J</strain>
        <strain>FVB/N</strain>
        <tissue>Mammary tumor</tissue>
    </source>
</reference>
<reference key="4">
    <citation type="journal article" date="2000" name="Oncogene">
        <title>The secreted glycoprotein CREG enhances differentiation of NTERA-2 human embryonal carcinoma cells.</title>
        <authorList>
            <person name="Veal E."/>
            <person name="Groisman R."/>
            <person name="Eisenstein M."/>
            <person name="Gill G."/>
        </authorList>
    </citation>
    <scope>TISSUE SPECIFICITY</scope>
    <scope>INDUCTION</scope>
    <scope>DEVELOPMENTAL STAGE</scope>
</reference>
<reference key="5">
    <citation type="journal article" date="2010" name="Cell">
        <title>A tissue-specific atlas of mouse protein phosphorylation and expression.</title>
        <authorList>
            <person name="Huttlin E.L."/>
            <person name="Jedrychowski M.P."/>
            <person name="Elias J.E."/>
            <person name="Goswami T."/>
            <person name="Rad R."/>
            <person name="Beausoleil S.A."/>
            <person name="Villen J."/>
            <person name="Haas W."/>
            <person name="Sowa M.E."/>
            <person name="Gygi S.P."/>
        </authorList>
    </citation>
    <scope>IDENTIFICATION BY MASS SPECTROMETRY [LARGE SCALE ANALYSIS]</scope>
    <source>
        <tissue>Brain</tissue>
        <tissue>Brown adipose tissue</tissue>
        <tissue>Heart</tissue>
        <tissue>Kidney</tissue>
        <tissue>Liver</tissue>
        <tissue>Lung</tissue>
        <tissue>Spleen</tissue>
        <tissue>Testis</tissue>
    </source>
</reference>
<name>CREG1_MOUSE</name>
<keyword id="KW-0325">Glycoprotein</keyword>
<keyword id="KW-0341">Growth regulation</keyword>
<keyword id="KW-1185">Reference proteome</keyword>
<keyword id="KW-0964">Secreted</keyword>
<keyword id="KW-0732">Signal</keyword>
<comment type="function">
    <text evidence="1">May contribute to the transcriptional control of cell growth and differentiation. Antagonizes transcriptional activation and cellular transformation by the adenovirus E1A protein. The transcriptional control activity of cell growth requires interaction with IGF2R (By similarity).</text>
</comment>
<comment type="subunit">
    <text evidence="1">Homodimer. Interacts with IGF2R; the interaction is dependent on glycosylation (By similarity).</text>
</comment>
<comment type="subcellular location">
    <subcellularLocation>
        <location evidence="1">Secreted</location>
    </subcellularLocation>
</comment>
<comment type="tissue specificity">
    <text evidence="4">Widely expressed.</text>
</comment>
<comment type="developmental stage">
    <text evidence="4">Found at low level from 7 dpc and increased during embryonic development.</text>
</comment>
<comment type="induction">
    <text evidence="4">Induced during differentiation.</text>
</comment>
<comment type="PTM">
    <text evidence="1">N-glycosylated.</text>
</comment>
<comment type="similarity">
    <text evidence="5">Belongs to the CREG family.</text>
</comment>
<evidence type="ECO:0000250" key="1"/>
<evidence type="ECO:0000255" key="2"/>
<evidence type="ECO:0000256" key="3">
    <source>
        <dbReference type="SAM" id="MobiDB-lite"/>
    </source>
</evidence>
<evidence type="ECO:0000269" key="4">
    <source>
    </source>
</evidence>
<evidence type="ECO:0000305" key="5"/>